<sequence>MQENLLEKQFLNHPLYTKIQELKALNLACNFSLDDSVNLSTNSQAKDEILAITKELKPWRKGPFKIDDLFIDTEWQSFIKFNILKPFMNEISQKCVADIGCNNGYYMFKMLEFNPAKLIGFDPSIKYRLQFELINALAKTPIEYELLGVEDLPRYGLKFDVIFCLGVIYHRSDPIKMLKDLKAGLNKNGVVFLDTMYIEDEREIALVPNKTYSKIPNIYFVPSISALKNWCERAGFKEFEVLATKKTDENEQRKTEWIDSFSLENFLDPKDKNLTIEGYEAPKRVYVRIGI</sequence>
<organism>
    <name type="scientific">Campylobacter jejuni subsp. jejuni serotype O:6 (strain 81116 / NCTC 11828)</name>
    <dbReference type="NCBI Taxonomy" id="407148"/>
    <lineage>
        <taxon>Bacteria</taxon>
        <taxon>Pseudomonadati</taxon>
        <taxon>Campylobacterota</taxon>
        <taxon>Epsilonproteobacteria</taxon>
        <taxon>Campylobacterales</taxon>
        <taxon>Campylobacteraceae</taxon>
        <taxon>Campylobacter</taxon>
    </lineage>
</organism>
<name>CMOB_CAMJ8</name>
<comment type="function">
    <text evidence="1">Catalyzes carboxymethyl transfer from carboxy-S-adenosyl-L-methionine (Cx-SAM) to 5-hydroxyuridine (ho5U) to form 5-carboxymethoxyuridine (cmo5U) at position 34 in tRNAs.</text>
</comment>
<comment type="catalytic activity">
    <reaction evidence="1">
        <text>carboxy-S-adenosyl-L-methionine + 5-hydroxyuridine(34) in tRNA = 5-carboxymethoxyuridine(34) in tRNA + S-adenosyl-L-homocysteine + H(+)</text>
        <dbReference type="Rhea" id="RHEA:52848"/>
        <dbReference type="Rhea" id="RHEA-COMP:13381"/>
        <dbReference type="Rhea" id="RHEA-COMP:13383"/>
        <dbReference type="ChEBI" id="CHEBI:15378"/>
        <dbReference type="ChEBI" id="CHEBI:57856"/>
        <dbReference type="ChEBI" id="CHEBI:134278"/>
        <dbReference type="ChEBI" id="CHEBI:136877"/>
        <dbReference type="ChEBI" id="CHEBI:136879"/>
    </reaction>
</comment>
<comment type="subunit">
    <text evidence="1">Homotetramer.</text>
</comment>
<comment type="similarity">
    <text evidence="1">Belongs to the class I-like SAM-binding methyltransferase superfamily. CmoB family.</text>
</comment>
<evidence type="ECO:0000255" key="1">
    <source>
        <dbReference type="HAMAP-Rule" id="MF_01590"/>
    </source>
</evidence>
<gene>
    <name evidence="1" type="primary">cmoB</name>
    <name type="ordered locus">C8J_0915</name>
</gene>
<accession>A8FM27</accession>
<keyword id="KW-0808">Transferase</keyword>
<keyword id="KW-0819">tRNA processing</keyword>
<reference key="1">
    <citation type="journal article" date="2007" name="J. Bacteriol.">
        <title>The complete genome sequence of Campylobacter jejuni strain 81116 (NCTC11828).</title>
        <authorList>
            <person name="Pearson B.M."/>
            <person name="Gaskin D.J.H."/>
            <person name="Segers R.P.A.M."/>
            <person name="Wells J.M."/>
            <person name="Nuijten P.J.M."/>
            <person name="van Vliet A.H.M."/>
        </authorList>
    </citation>
    <scope>NUCLEOTIDE SEQUENCE [LARGE SCALE GENOMIC DNA]</scope>
    <source>
        <strain>81116 / NCTC 11828</strain>
    </source>
</reference>
<protein>
    <recommendedName>
        <fullName evidence="1">tRNA U34 carboxymethyltransferase</fullName>
        <ecNumber evidence="1">2.5.1.-</ecNumber>
    </recommendedName>
</protein>
<feature type="chain" id="PRO_1000073618" description="tRNA U34 carboxymethyltransferase">
    <location>
        <begin position="1"/>
        <end position="291"/>
    </location>
</feature>
<feature type="binding site" evidence="1">
    <location>
        <position position="61"/>
    </location>
    <ligand>
        <name>carboxy-S-adenosyl-L-methionine</name>
        <dbReference type="ChEBI" id="CHEBI:134278"/>
    </ligand>
</feature>
<feature type="binding site" evidence="1">
    <location>
        <position position="75"/>
    </location>
    <ligand>
        <name>carboxy-S-adenosyl-L-methionine</name>
        <dbReference type="ChEBI" id="CHEBI:134278"/>
    </ligand>
</feature>
<feature type="binding site" evidence="1">
    <location>
        <position position="80"/>
    </location>
    <ligand>
        <name>carboxy-S-adenosyl-L-methionine</name>
        <dbReference type="ChEBI" id="CHEBI:134278"/>
    </ligand>
</feature>
<feature type="binding site" evidence="1">
    <location>
        <position position="100"/>
    </location>
    <ligand>
        <name>carboxy-S-adenosyl-L-methionine</name>
        <dbReference type="ChEBI" id="CHEBI:134278"/>
    </ligand>
</feature>
<feature type="binding site" evidence="1">
    <location>
        <begin position="122"/>
        <end position="124"/>
    </location>
    <ligand>
        <name>carboxy-S-adenosyl-L-methionine</name>
        <dbReference type="ChEBI" id="CHEBI:134278"/>
    </ligand>
</feature>
<feature type="binding site" evidence="1">
    <location>
        <begin position="149"/>
        <end position="150"/>
    </location>
    <ligand>
        <name>carboxy-S-adenosyl-L-methionine</name>
        <dbReference type="ChEBI" id="CHEBI:134278"/>
    </ligand>
</feature>
<feature type="binding site" evidence="1">
    <location>
        <position position="169"/>
    </location>
    <ligand>
        <name>carboxy-S-adenosyl-L-methionine</name>
        <dbReference type="ChEBI" id="CHEBI:134278"/>
    </ligand>
</feature>
<feature type="binding site" evidence="1">
    <location>
        <position position="284"/>
    </location>
    <ligand>
        <name>carboxy-S-adenosyl-L-methionine</name>
        <dbReference type="ChEBI" id="CHEBI:134278"/>
    </ligand>
</feature>
<proteinExistence type="inferred from homology"/>
<dbReference type="EC" id="2.5.1.-" evidence="1"/>
<dbReference type="EMBL" id="CP000814">
    <property type="protein sequence ID" value="ABV52514.1"/>
    <property type="molecule type" value="Genomic_DNA"/>
</dbReference>
<dbReference type="SMR" id="A8FM27"/>
<dbReference type="KEGG" id="cju:C8J_0915"/>
<dbReference type="HOGENOM" id="CLU_052665_1_0_7"/>
<dbReference type="GO" id="GO:0016765">
    <property type="term" value="F:transferase activity, transferring alkyl or aryl (other than methyl) groups"/>
    <property type="evidence" value="ECO:0007669"/>
    <property type="project" value="InterPro"/>
</dbReference>
<dbReference type="GO" id="GO:0002098">
    <property type="term" value="P:tRNA wobble uridine modification"/>
    <property type="evidence" value="ECO:0007669"/>
    <property type="project" value="InterPro"/>
</dbReference>
<dbReference type="CDD" id="cd02440">
    <property type="entry name" value="AdoMet_MTases"/>
    <property type="match status" value="1"/>
</dbReference>
<dbReference type="Gene3D" id="3.40.50.150">
    <property type="entry name" value="Vaccinia Virus protein VP39"/>
    <property type="match status" value="1"/>
</dbReference>
<dbReference type="HAMAP" id="MF_01590">
    <property type="entry name" value="tRNA_carboxymethyltr_CmoB"/>
    <property type="match status" value="1"/>
</dbReference>
<dbReference type="InterPro" id="IPR010017">
    <property type="entry name" value="CmoB"/>
</dbReference>
<dbReference type="InterPro" id="IPR027555">
    <property type="entry name" value="Mo5U34_MeTrfas-like"/>
</dbReference>
<dbReference type="InterPro" id="IPR029063">
    <property type="entry name" value="SAM-dependent_MTases_sf"/>
</dbReference>
<dbReference type="NCBIfam" id="NF011650">
    <property type="entry name" value="PRK15068.1"/>
    <property type="match status" value="1"/>
</dbReference>
<dbReference type="NCBIfam" id="TIGR00452">
    <property type="entry name" value="tRNA 5-methoxyuridine(34)/uridine 5-oxyacetic acid(34) synthase CmoB"/>
    <property type="match status" value="1"/>
</dbReference>
<dbReference type="PANTHER" id="PTHR43861">
    <property type="entry name" value="TRANS-ACONITATE 2-METHYLTRANSFERASE-RELATED"/>
    <property type="match status" value="1"/>
</dbReference>
<dbReference type="Pfam" id="PF08003">
    <property type="entry name" value="Methyltransf_9"/>
    <property type="match status" value="1"/>
</dbReference>
<dbReference type="SUPFAM" id="SSF53335">
    <property type="entry name" value="S-adenosyl-L-methionine-dependent methyltransferases"/>
    <property type="match status" value="1"/>
</dbReference>